<comment type="function">
    <text evidence="1">Transcriptional repressor which may act as a negative-feedback regulator of CLOCK-BMAL1 transcriptional activity in the circadian-clock mechanism. May stimulate BMAL1-dependent phosphorylation of CLOCK. However, the physiological relevance of these observations is unsure, since experiments in knockout mice showed that CIPC is not critially required for basic circadian clock.</text>
</comment>
<comment type="subunit">
    <text evidence="1 2">Interacts with CLOCK. Forms a ternary complex with the CLOCK-BMAL1 heterodimer (By similarity). Interacts with CAD and HSPA5 (By similarity).</text>
</comment>
<comment type="subcellular location">
    <subcellularLocation>
        <location evidence="1">Nucleus</location>
    </subcellularLocation>
    <subcellularLocation>
        <location evidence="2">Cytoplasm</location>
        <location evidence="2">Cytosol</location>
    </subcellularLocation>
    <text evidence="1 2">Predominantly localizes to the nucleus, where it co-localizes with CLOCK. At the G1/S boundary, partially translocated to the cytosol.</text>
</comment>
<protein>
    <recommendedName>
        <fullName>CLOCK-interacting pacemaker</fullName>
    </recommendedName>
    <alternativeName>
        <fullName>CLOCK-interacting circadian protein</fullName>
    </alternativeName>
</protein>
<name>CIPC_PONAB</name>
<gene>
    <name type="primary">CIPC</name>
</gene>
<accession>Q5R8C5</accession>
<dbReference type="EMBL" id="CR859828">
    <property type="protein sequence ID" value="CAH91985.1"/>
    <property type="molecule type" value="mRNA"/>
</dbReference>
<dbReference type="RefSeq" id="NP_001126152.1">
    <property type="nucleotide sequence ID" value="NM_001132680.1"/>
</dbReference>
<dbReference type="SMR" id="Q5R8C5"/>
<dbReference type="FunCoup" id="Q5R8C5">
    <property type="interactions" value="2694"/>
</dbReference>
<dbReference type="STRING" id="9601.ENSPPYP00000006843"/>
<dbReference type="GeneID" id="100173111"/>
<dbReference type="KEGG" id="pon:100173111"/>
<dbReference type="CTD" id="85457"/>
<dbReference type="eggNOG" id="ENOG502RJ2N">
    <property type="taxonomic scope" value="Eukaryota"/>
</dbReference>
<dbReference type="InParanoid" id="Q5R8C5"/>
<dbReference type="OrthoDB" id="6374619at2759"/>
<dbReference type="Proteomes" id="UP000001595">
    <property type="component" value="Unplaced"/>
</dbReference>
<dbReference type="GO" id="GO:0005829">
    <property type="term" value="C:cytosol"/>
    <property type="evidence" value="ECO:0007669"/>
    <property type="project" value="UniProtKB-SubCell"/>
</dbReference>
<dbReference type="GO" id="GO:0005634">
    <property type="term" value="C:nucleus"/>
    <property type="evidence" value="ECO:0000250"/>
    <property type="project" value="UniProtKB"/>
</dbReference>
<dbReference type="GO" id="GO:0042754">
    <property type="term" value="P:negative regulation of circadian rhythm"/>
    <property type="evidence" value="ECO:0000250"/>
    <property type="project" value="UniProtKB"/>
</dbReference>
<dbReference type="GO" id="GO:0045892">
    <property type="term" value="P:negative regulation of DNA-templated transcription"/>
    <property type="evidence" value="ECO:0000250"/>
    <property type="project" value="UniProtKB"/>
</dbReference>
<dbReference type="GO" id="GO:0048511">
    <property type="term" value="P:rhythmic process"/>
    <property type="evidence" value="ECO:0007669"/>
    <property type="project" value="UniProtKB-KW"/>
</dbReference>
<dbReference type="InterPro" id="IPR031602">
    <property type="entry name" value="CIPC"/>
</dbReference>
<dbReference type="PANTHER" id="PTHR34648">
    <property type="entry name" value="CLOCK-INTERACTING PACEMAKER"/>
    <property type="match status" value="1"/>
</dbReference>
<dbReference type="PANTHER" id="PTHR34648:SF1">
    <property type="entry name" value="CLOCK-INTERACTING PACEMAKER"/>
    <property type="match status" value="1"/>
</dbReference>
<dbReference type="Pfam" id="PF15800">
    <property type="entry name" value="CiPC"/>
    <property type="match status" value="1"/>
</dbReference>
<proteinExistence type="evidence at transcript level"/>
<feature type="chain" id="PRO_0000256135" description="CLOCK-interacting pacemaker">
    <location>
        <begin position="1"/>
        <end position="399"/>
    </location>
</feature>
<feature type="region of interest" description="Disordered" evidence="4">
    <location>
        <begin position="1"/>
        <end position="85"/>
    </location>
</feature>
<feature type="region of interest" description="Disordered" evidence="4">
    <location>
        <begin position="159"/>
        <end position="224"/>
    </location>
</feature>
<feature type="region of interest" description="Disordered" evidence="4">
    <location>
        <begin position="378"/>
        <end position="399"/>
    </location>
</feature>
<feature type="coiled-coil region" evidence="3">
    <location>
        <begin position="333"/>
        <end position="359"/>
    </location>
</feature>
<feature type="compositionally biased region" description="Basic and acidic residues" evidence="4">
    <location>
        <begin position="1"/>
        <end position="12"/>
    </location>
</feature>
<feature type="compositionally biased region" description="Polar residues" evidence="4">
    <location>
        <begin position="378"/>
        <end position="388"/>
    </location>
</feature>
<feature type="modified residue" description="Phosphoserine" evidence="2">
    <location>
        <position position="213"/>
    </location>
</feature>
<keyword id="KW-0090">Biological rhythms</keyword>
<keyword id="KW-0175">Coiled coil</keyword>
<keyword id="KW-0963">Cytoplasm</keyword>
<keyword id="KW-0539">Nucleus</keyword>
<keyword id="KW-0597">Phosphoprotein</keyword>
<keyword id="KW-1185">Reference proteome</keyword>
<keyword id="KW-0678">Repressor</keyword>
<keyword id="KW-0804">Transcription</keyword>
<keyword id="KW-0805">Transcription regulation</keyword>
<reference key="1">
    <citation type="submission" date="2004-11" db="EMBL/GenBank/DDBJ databases">
        <authorList>
            <consortium name="The German cDNA consortium"/>
        </authorList>
    </citation>
    <scope>NUCLEOTIDE SEQUENCE [LARGE SCALE MRNA]</scope>
    <source>
        <tissue>Brain cortex</tissue>
    </source>
</reference>
<sequence length="399" mass="42739">MERKNSSRESPRRLSAKVGKGTEMKKVARQLGMAAAESDKDSGFSDGSSECLSSAEQMESEDMLSALGWSREDRPRQNSKTAKNAFPTLSPMVVMKNVLVKQGSSSSQLQSWTVQPSFEVISAQPQLLFLHPPVPSPVSPCHTGEKKSDSRNYLPILNSYTKIAPHPGKRGLSVGPEEKGTSGVQKKICTERLGPSLSSNEPTKAGAVPSSPSTPAPPSAKLAEDSALQGVPSLVAGGSPQTLQPVSSSHVAKAPSLTFASPASPVCASDSTLHGLESNSPLSPLSANYSSPLWAAEHLCRSPDIFSEQRQSKHRRFQNTLVVLHKSGLLEITLKTKELIRQNQATQVELDQLKEQTQLFIEATKSRAPQAWAKLQASLTPGSSNTGSDLEAFSDHPDI</sequence>
<organism>
    <name type="scientific">Pongo abelii</name>
    <name type="common">Sumatran orangutan</name>
    <name type="synonym">Pongo pygmaeus abelii</name>
    <dbReference type="NCBI Taxonomy" id="9601"/>
    <lineage>
        <taxon>Eukaryota</taxon>
        <taxon>Metazoa</taxon>
        <taxon>Chordata</taxon>
        <taxon>Craniata</taxon>
        <taxon>Vertebrata</taxon>
        <taxon>Euteleostomi</taxon>
        <taxon>Mammalia</taxon>
        <taxon>Eutheria</taxon>
        <taxon>Euarchontoglires</taxon>
        <taxon>Primates</taxon>
        <taxon>Haplorrhini</taxon>
        <taxon>Catarrhini</taxon>
        <taxon>Hominidae</taxon>
        <taxon>Pongo</taxon>
    </lineage>
</organism>
<evidence type="ECO:0000250" key="1">
    <source>
        <dbReference type="UniProtKB" id="Q8R0W1"/>
    </source>
</evidence>
<evidence type="ECO:0000250" key="2">
    <source>
        <dbReference type="UniProtKB" id="Q9C0C6"/>
    </source>
</evidence>
<evidence type="ECO:0000255" key="3"/>
<evidence type="ECO:0000256" key="4">
    <source>
        <dbReference type="SAM" id="MobiDB-lite"/>
    </source>
</evidence>